<sequence length="428" mass="46389">MRYTKSEEAMKVAETLMPGGVNSPVRAFKSVDTPAIFMDHGKGSKIYDIDGNEYIDYVLSWGPLILGHRDPQVISHLHEAIDKGTSFGASTLLENKLAQLVIDRVPSIEKVRMVSSGTEATLDTLRLARGYTGRNKIVKFEGCYHGHSDSLLIKAGSGVATLGLPDSPGVPEGIAKNTITVPYNDLDALKIAFEKFGDDIAGVIVEPVAGNMGVVPPIEGFLQGLRDITTEYGALLIFDEVMTGFRVGYHCAQGYFGVTPDLTCLGKVIGGGLPVGAFGGKKEIMDHIAPLGNIYQAGTLSGNPLAMTSGYETLSQLTPETYEYFNMLGDILEDGLKRVFAKHNVPITVNRAGSMIGYFLNEGPVTNFEQANKSDLKLFAEMYREMAKEGVFLPPSQFEGTFLSTAHTKEDIEKTIQAFDTALSRIVK</sequence>
<proteinExistence type="inferred from homology"/>
<reference key="1">
    <citation type="journal article" date="2001" name="Lancet">
        <title>Whole genome sequencing of meticillin-resistant Staphylococcus aureus.</title>
        <authorList>
            <person name="Kuroda M."/>
            <person name="Ohta T."/>
            <person name="Uchiyama I."/>
            <person name="Baba T."/>
            <person name="Yuzawa H."/>
            <person name="Kobayashi I."/>
            <person name="Cui L."/>
            <person name="Oguchi A."/>
            <person name="Aoki K."/>
            <person name="Nagai Y."/>
            <person name="Lian J.-Q."/>
            <person name="Ito T."/>
            <person name="Kanamori M."/>
            <person name="Matsumaru H."/>
            <person name="Maruyama A."/>
            <person name="Murakami H."/>
            <person name="Hosoyama A."/>
            <person name="Mizutani-Ui Y."/>
            <person name="Takahashi N.K."/>
            <person name="Sawano T."/>
            <person name="Inoue R."/>
            <person name="Kaito C."/>
            <person name="Sekimizu K."/>
            <person name="Hirakawa H."/>
            <person name="Kuhara S."/>
            <person name="Goto S."/>
            <person name="Yabuzaki J."/>
            <person name="Kanehisa M."/>
            <person name="Yamashita A."/>
            <person name="Oshima K."/>
            <person name="Furuya K."/>
            <person name="Yoshino C."/>
            <person name="Shiba T."/>
            <person name="Hattori M."/>
            <person name="Ogasawara N."/>
            <person name="Hayashi H."/>
            <person name="Hiramatsu K."/>
        </authorList>
    </citation>
    <scope>NUCLEOTIDE SEQUENCE [LARGE SCALE GENOMIC DNA]</scope>
    <source>
        <strain>Mu50 / ATCC 700699</strain>
    </source>
</reference>
<organism>
    <name type="scientific">Staphylococcus aureus (strain Mu50 / ATCC 700699)</name>
    <dbReference type="NCBI Taxonomy" id="158878"/>
    <lineage>
        <taxon>Bacteria</taxon>
        <taxon>Bacillati</taxon>
        <taxon>Bacillota</taxon>
        <taxon>Bacilli</taxon>
        <taxon>Bacillales</taxon>
        <taxon>Staphylococcaceae</taxon>
        <taxon>Staphylococcus</taxon>
    </lineage>
</organism>
<feature type="chain" id="PRO_0000120443" description="Glutamate-1-semialdehyde 2,1-aminomutase 1">
    <location>
        <begin position="1"/>
        <end position="428"/>
    </location>
</feature>
<feature type="modified residue" description="N6-(pyridoxal phosphate)lysine" evidence="1">
    <location>
        <position position="267"/>
    </location>
</feature>
<comment type="catalytic activity">
    <reaction evidence="1">
        <text>(S)-4-amino-5-oxopentanoate = 5-aminolevulinate</text>
        <dbReference type="Rhea" id="RHEA:14265"/>
        <dbReference type="ChEBI" id="CHEBI:57501"/>
        <dbReference type="ChEBI" id="CHEBI:356416"/>
        <dbReference type="EC" id="5.4.3.8"/>
    </reaction>
</comment>
<comment type="cofactor">
    <cofactor evidence="1">
        <name>pyridoxal 5'-phosphate</name>
        <dbReference type="ChEBI" id="CHEBI:597326"/>
    </cofactor>
</comment>
<comment type="pathway">
    <text evidence="1">Porphyrin-containing compound metabolism; protoporphyrin-IX biosynthesis; 5-aminolevulinate from L-glutamyl-tRNA(Glu): step 2/2.</text>
</comment>
<comment type="subunit">
    <text evidence="1">Homodimer.</text>
</comment>
<comment type="subcellular location">
    <subcellularLocation>
        <location evidence="1">Cytoplasm</location>
    </subcellularLocation>
</comment>
<comment type="similarity">
    <text evidence="1">Belongs to the class-III pyridoxal-phosphate-dependent aminotransferase family. HemL subfamily.</text>
</comment>
<accession>P63508</accession>
<accession>Q99TJ4</accession>
<gene>
    <name evidence="1" type="primary">hemL1</name>
    <name type="ordered locus">SAV1667</name>
</gene>
<evidence type="ECO:0000255" key="1">
    <source>
        <dbReference type="HAMAP-Rule" id="MF_00375"/>
    </source>
</evidence>
<keyword id="KW-0963">Cytoplasm</keyword>
<keyword id="KW-0413">Isomerase</keyword>
<keyword id="KW-0627">Porphyrin biosynthesis</keyword>
<keyword id="KW-0663">Pyridoxal phosphate</keyword>
<protein>
    <recommendedName>
        <fullName evidence="1">Glutamate-1-semialdehyde 2,1-aminomutase 1</fullName>
        <shortName evidence="1">GSA 1</shortName>
        <ecNumber evidence="1">5.4.3.8</ecNumber>
    </recommendedName>
    <alternativeName>
        <fullName evidence="1">Glutamate-1-semialdehyde aminotransferase 1</fullName>
        <shortName evidence="1">GSA-AT 1</shortName>
    </alternativeName>
</protein>
<dbReference type="EC" id="5.4.3.8" evidence="1"/>
<dbReference type="EMBL" id="BA000017">
    <property type="protein sequence ID" value="BAB57829.1"/>
    <property type="molecule type" value="Genomic_DNA"/>
</dbReference>
<dbReference type="SMR" id="P63508"/>
<dbReference type="KEGG" id="sav:SAV1667"/>
<dbReference type="HOGENOM" id="CLU_016922_1_5_9"/>
<dbReference type="PhylomeDB" id="P63508"/>
<dbReference type="UniPathway" id="UPA00251">
    <property type="reaction ID" value="UER00317"/>
</dbReference>
<dbReference type="Proteomes" id="UP000002481">
    <property type="component" value="Chromosome"/>
</dbReference>
<dbReference type="GO" id="GO:0005737">
    <property type="term" value="C:cytoplasm"/>
    <property type="evidence" value="ECO:0007669"/>
    <property type="project" value="UniProtKB-SubCell"/>
</dbReference>
<dbReference type="GO" id="GO:0042286">
    <property type="term" value="F:glutamate-1-semialdehyde 2,1-aminomutase activity"/>
    <property type="evidence" value="ECO:0007669"/>
    <property type="project" value="UniProtKB-UniRule"/>
</dbReference>
<dbReference type="GO" id="GO:0030170">
    <property type="term" value="F:pyridoxal phosphate binding"/>
    <property type="evidence" value="ECO:0007669"/>
    <property type="project" value="InterPro"/>
</dbReference>
<dbReference type="GO" id="GO:0008483">
    <property type="term" value="F:transaminase activity"/>
    <property type="evidence" value="ECO:0007669"/>
    <property type="project" value="InterPro"/>
</dbReference>
<dbReference type="GO" id="GO:0006782">
    <property type="term" value="P:protoporphyrinogen IX biosynthetic process"/>
    <property type="evidence" value="ECO:0007669"/>
    <property type="project" value="UniProtKB-UniRule"/>
</dbReference>
<dbReference type="CDD" id="cd00610">
    <property type="entry name" value="OAT_like"/>
    <property type="match status" value="1"/>
</dbReference>
<dbReference type="FunFam" id="3.40.640.10:FF:000021">
    <property type="entry name" value="Glutamate-1-semialdehyde 2,1-aminomutase"/>
    <property type="match status" value="1"/>
</dbReference>
<dbReference type="Gene3D" id="3.90.1150.10">
    <property type="entry name" value="Aspartate Aminotransferase, domain 1"/>
    <property type="match status" value="1"/>
</dbReference>
<dbReference type="Gene3D" id="3.40.640.10">
    <property type="entry name" value="Type I PLP-dependent aspartate aminotransferase-like (Major domain)"/>
    <property type="match status" value="1"/>
</dbReference>
<dbReference type="HAMAP" id="MF_00375">
    <property type="entry name" value="HemL_aminotrans_3"/>
    <property type="match status" value="1"/>
</dbReference>
<dbReference type="InterPro" id="IPR004639">
    <property type="entry name" value="4pyrrol_synth_GluAld_NH2Trfase"/>
</dbReference>
<dbReference type="InterPro" id="IPR005814">
    <property type="entry name" value="Aminotrans_3"/>
</dbReference>
<dbReference type="InterPro" id="IPR049704">
    <property type="entry name" value="Aminotrans_3_PPA_site"/>
</dbReference>
<dbReference type="InterPro" id="IPR015424">
    <property type="entry name" value="PyrdxlP-dep_Trfase"/>
</dbReference>
<dbReference type="InterPro" id="IPR015421">
    <property type="entry name" value="PyrdxlP-dep_Trfase_major"/>
</dbReference>
<dbReference type="InterPro" id="IPR015422">
    <property type="entry name" value="PyrdxlP-dep_Trfase_small"/>
</dbReference>
<dbReference type="NCBIfam" id="TIGR00713">
    <property type="entry name" value="hemL"/>
    <property type="match status" value="1"/>
</dbReference>
<dbReference type="NCBIfam" id="NF000818">
    <property type="entry name" value="PRK00062.1"/>
    <property type="match status" value="1"/>
</dbReference>
<dbReference type="PANTHER" id="PTHR43713">
    <property type="entry name" value="GLUTAMATE-1-SEMIALDEHYDE 2,1-AMINOMUTASE"/>
    <property type="match status" value="1"/>
</dbReference>
<dbReference type="PANTHER" id="PTHR43713:SF3">
    <property type="entry name" value="GLUTAMATE-1-SEMIALDEHYDE 2,1-AMINOMUTASE 1, CHLOROPLASTIC-RELATED"/>
    <property type="match status" value="1"/>
</dbReference>
<dbReference type="Pfam" id="PF00202">
    <property type="entry name" value="Aminotran_3"/>
    <property type="match status" value="1"/>
</dbReference>
<dbReference type="SUPFAM" id="SSF53383">
    <property type="entry name" value="PLP-dependent transferases"/>
    <property type="match status" value="1"/>
</dbReference>
<dbReference type="PROSITE" id="PS00600">
    <property type="entry name" value="AA_TRANSFER_CLASS_3"/>
    <property type="match status" value="1"/>
</dbReference>
<name>GSA1_STAAM</name>